<reference key="1">
    <citation type="journal article" date="2007" name="ISME J.">
        <title>Population level functional diversity in a microbial community revealed by comparative genomic and metagenomic analyses.</title>
        <authorList>
            <person name="Bhaya D."/>
            <person name="Grossman A.R."/>
            <person name="Steunou A.-S."/>
            <person name="Khuri N."/>
            <person name="Cohan F.M."/>
            <person name="Hamamura N."/>
            <person name="Melendrez M.C."/>
            <person name="Bateson M.M."/>
            <person name="Ward D.M."/>
            <person name="Heidelberg J.F."/>
        </authorList>
    </citation>
    <scope>NUCLEOTIDE SEQUENCE [LARGE SCALE GENOMIC DNA]</scope>
    <source>
        <strain>JA-3-3Ab</strain>
    </source>
</reference>
<name>CCS1_SYNJA</name>
<gene>
    <name evidence="1" type="primary">ccsB</name>
    <name evidence="1" type="synonym">ccs1</name>
    <name type="ordered locus">CYA_0254</name>
</gene>
<keyword id="KW-0201">Cytochrome c-type biogenesis</keyword>
<keyword id="KW-0472">Membrane</keyword>
<keyword id="KW-0793">Thylakoid</keyword>
<keyword id="KW-0812">Transmembrane</keyword>
<keyword id="KW-1133">Transmembrane helix</keyword>
<comment type="function">
    <text evidence="1">Required during biogenesis of c-type cytochromes (cytochrome c6 and cytochrome f) at the step of heme attachment.</text>
</comment>
<comment type="subunit">
    <text evidence="1">May interact with CcsA.</text>
</comment>
<comment type="subcellular location">
    <subcellularLocation>
        <location evidence="1">Cellular thylakoid membrane</location>
        <topology evidence="1">Multi-pass membrane protein</topology>
    </subcellularLocation>
</comment>
<comment type="similarity">
    <text evidence="1">Belongs to the Ccs1/CcsB family.</text>
</comment>
<evidence type="ECO:0000255" key="1">
    <source>
        <dbReference type="HAMAP-Rule" id="MF_01392"/>
    </source>
</evidence>
<evidence type="ECO:0000256" key="2">
    <source>
        <dbReference type="SAM" id="MobiDB-lite"/>
    </source>
</evidence>
<protein>
    <recommendedName>
        <fullName evidence="1">Cytochrome c biogenesis protein CcsB</fullName>
    </recommendedName>
</protein>
<organism>
    <name type="scientific">Synechococcus sp. (strain JA-3-3Ab)</name>
    <name type="common">Cyanobacteria bacterium Yellowstone A-Prime</name>
    <dbReference type="NCBI Taxonomy" id="321327"/>
    <lineage>
        <taxon>Bacteria</taxon>
        <taxon>Bacillati</taxon>
        <taxon>Cyanobacteriota</taxon>
        <taxon>Cyanophyceae</taxon>
        <taxon>Synechococcales</taxon>
        <taxon>Synechococcaceae</taxon>
        <taxon>Synechococcus</taxon>
    </lineage>
</organism>
<accession>Q2JXK6</accession>
<dbReference type="EMBL" id="CP000239">
    <property type="protein sequence ID" value="ABC98476.1"/>
    <property type="molecule type" value="Genomic_DNA"/>
</dbReference>
<dbReference type="RefSeq" id="WP_011429167.1">
    <property type="nucleotide sequence ID" value="NC_007775.1"/>
</dbReference>
<dbReference type="STRING" id="321327.CYA_0254"/>
<dbReference type="KEGG" id="cya:CYA_0254"/>
<dbReference type="eggNOG" id="COG1333">
    <property type="taxonomic scope" value="Bacteria"/>
</dbReference>
<dbReference type="HOGENOM" id="CLU_034630_0_0_3"/>
<dbReference type="OrthoDB" id="9770923at2"/>
<dbReference type="Proteomes" id="UP000008818">
    <property type="component" value="Chromosome"/>
</dbReference>
<dbReference type="GO" id="GO:0031676">
    <property type="term" value="C:plasma membrane-derived thylakoid membrane"/>
    <property type="evidence" value="ECO:0007669"/>
    <property type="project" value="UniProtKB-SubCell"/>
</dbReference>
<dbReference type="GO" id="GO:0017004">
    <property type="term" value="P:cytochrome complex assembly"/>
    <property type="evidence" value="ECO:0007669"/>
    <property type="project" value="UniProtKB-UniRule"/>
</dbReference>
<dbReference type="HAMAP" id="MF_01392">
    <property type="entry name" value="CytC_Ccs1"/>
    <property type="match status" value="1"/>
</dbReference>
<dbReference type="InterPro" id="IPR023494">
    <property type="entry name" value="Cyt_c_bgen_Ccs1/CcsB/ResB"/>
</dbReference>
<dbReference type="InterPro" id="IPR007816">
    <property type="entry name" value="ResB-like_domain"/>
</dbReference>
<dbReference type="PANTHER" id="PTHR31566">
    <property type="entry name" value="CYTOCHROME C BIOGENESIS PROTEIN CCS1, CHLOROPLASTIC"/>
    <property type="match status" value="1"/>
</dbReference>
<dbReference type="PANTHER" id="PTHR31566:SF0">
    <property type="entry name" value="CYTOCHROME C BIOGENESIS PROTEIN CCS1, CHLOROPLASTIC"/>
    <property type="match status" value="1"/>
</dbReference>
<dbReference type="Pfam" id="PF05140">
    <property type="entry name" value="ResB"/>
    <property type="match status" value="2"/>
</dbReference>
<sequence>MVIPSLPLSRWLSPLRRYFRHELLPLLADLRLAIGLFLAIALLSAVGTVIEQEETVAFYQAHYPEHPALFGFLTWRLILKLGLDHVYRTSWFLALLILFGSSLAACSLTRQWPMLKVARRWSYLTRPHSFQRLPFWTYLPQRSLQGLPQRLRQRGYAVFQDGSRLYARKGLIGRFGPILVHVSLLLILLGAIWGSLAGFKAQALIPSGSVAAIEQVTGAGDLAHLPTWQIRVNRFWIDYAPDGRVKQFYSDLSILDGGQEVKRQTISVNHPLSYRGVTLYQADWSIDSIRIRLNNSPPFQIPVVPVPTQAGSKLWGAFVPTRPDLSEGLTLLLPDLQGTALLYDTQGQWIGSLRQGMSLALDEVAPQRFPNRLTLHLDEVIGATGLQIKSDPGIPLVYLGFGLLMLGVAMSYFSYSQVWALETEAGLYLGGKTNRALVSFEREFARLVEQQLLSSPPSPAKEPPPAARVGGTESLANG</sequence>
<proteinExistence type="inferred from homology"/>
<feature type="chain" id="PRO_0000363631" description="Cytochrome c biogenesis protein CcsB">
    <location>
        <begin position="1"/>
        <end position="478"/>
    </location>
</feature>
<feature type="transmembrane region" description="Helical" evidence="1">
    <location>
        <begin position="30"/>
        <end position="50"/>
    </location>
</feature>
<feature type="transmembrane region" description="Helical" evidence="1">
    <location>
        <begin position="89"/>
        <end position="109"/>
    </location>
</feature>
<feature type="transmembrane region" description="Helical" evidence="1">
    <location>
        <begin position="175"/>
        <end position="195"/>
    </location>
</feature>
<feature type="region of interest" description="Disordered" evidence="2">
    <location>
        <begin position="453"/>
        <end position="478"/>
    </location>
</feature>
<feature type="compositionally biased region" description="Pro residues" evidence="2">
    <location>
        <begin position="456"/>
        <end position="466"/>
    </location>
</feature>